<dbReference type="EC" id="3.1.-.-" evidence="1"/>
<dbReference type="EMBL" id="AE014295">
    <property type="protein sequence ID" value="AAN24193.1"/>
    <property type="status" value="ALT_INIT"/>
    <property type="molecule type" value="Genomic_DNA"/>
</dbReference>
<dbReference type="RefSeq" id="NP_695557.1">
    <property type="nucleotide sequence ID" value="NC_004307.2"/>
</dbReference>
<dbReference type="RefSeq" id="WP_007051476.1">
    <property type="nucleotide sequence ID" value="NC_004307.2"/>
</dbReference>
<dbReference type="SMR" id="Q8G7B5"/>
<dbReference type="STRING" id="206672.BL0355"/>
<dbReference type="EnsemblBacteria" id="AAN24193">
    <property type="protein sequence ID" value="AAN24193"/>
    <property type="gene ID" value="BL0355"/>
</dbReference>
<dbReference type="GeneID" id="69577501"/>
<dbReference type="KEGG" id="blo:BL0355"/>
<dbReference type="PATRIC" id="fig|206672.9.peg.1091"/>
<dbReference type="HOGENOM" id="CLU_069350_0_0_11"/>
<dbReference type="OrthoDB" id="3344925at2"/>
<dbReference type="Proteomes" id="UP000000439">
    <property type="component" value="Chromosome"/>
</dbReference>
<dbReference type="GO" id="GO:0005737">
    <property type="term" value="C:cytoplasm"/>
    <property type="evidence" value="ECO:0007669"/>
    <property type="project" value="UniProtKB-SubCell"/>
</dbReference>
<dbReference type="GO" id="GO:0003677">
    <property type="term" value="F:DNA binding"/>
    <property type="evidence" value="ECO:0007669"/>
    <property type="project" value="UniProtKB-KW"/>
</dbReference>
<dbReference type="GO" id="GO:0000014">
    <property type="term" value="F:single-stranded DNA endodeoxyribonuclease activity"/>
    <property type="evidence" value="ECO:0007669"/>
    <property type="project" value="UniProtKB-UniRule"/>
</dbReference>
<dbReference type="CDD" id="cd22341">
    <property type="entry name" value="NucS-like"/>
    <property type="match status" value="1"/>
</dbReference>
<dbReference type="Gene3D" id="2.70.180.20">
    <property type="match status" value="1"/>
</dbReference>
<dbReference type="Gene3D" id="3.40.1350.10">
    <property type="match status" value="1"/>
</dbReference>
<dbReference type="HAMAP" id="MF_00722">
    <property type="entry name" value="NucS"/>
    <property type="match status" value="1"/>
</dbReference>
<dbReference type="InterPro" id="IPR002793">
    <property type="entry name" value="Endonuclease_NucS"/>
</dbReference>
<dbReference type="InterPro" id="IPR048301">
    <property type="entry name" value="NucS_C"/>
</dbReference>
<dbReference type="InterPro" id="IPR048302">
    <property type="entry name" value="NucS_N"/>
</dbReference>
<dbReference type="InterPro" id="IPR049173">
    <property type="entry name" value="NucS_N_sf"/>
</dbReference>
<dbReference type="InterPro" id="IPR011856">
    <property type="entry name" value="tRNA_endonuc-like_dom_sf"/>
</dbReference>
<dbReference type="NCBIfam" id="NF002876">
    <property type="entry name" value="PRK03298.1"/>
    <property type="match status" value="1"/>
</dbReference>
<dbReference type="PANTHER" id="PTHR38814">
    <property type="entry name" value="ENDONUCLEASE NUCS"/>
    <property type="match status" value="1"/>
</dbReference>
<dbReference type="PANTHER" id="PTHR38814:SF1">
    <property type="entry name" value="ENDONUCLEASE NUCS"/>
    <property type="match status" value="1"/>
</dbReference>
<dbReference type="Pfam" id="PF01939">
    <property type="entry name" value="NucS_C"/>
    <property type="match status" value="1"/>
</dbReference>
<dbReference type="Pfam" id="PF21003">
    <property type="entry name" value="NucS_N"/>
    <property type="match status" value="1"/>
</dbReference>
<reference key="1">
    <citation type="journal article" date="2002" name="Proc. Natl. Acad. Sci. U.S.A.">
        <title>The genome sequence of Bifidobacterium longum reflects its adaptation to the human gastrointestinal tract.</title>
        <authorList>
            <person name="Schell M.A."/>
            <person name="Karmirantzou M."/>
            <person name="Snel B."/>
            <person name="Vilanova D."/>
            <person name="Berger B."/>
            <person name="Pessi G."/>
            <person name="Zwahlen M.-C."/>
            <person name="Desiere F."/>
            <person name="Bork P."/>
            <person name="Delley M."/>
            <person name="Pridmore R.D."/>
            <person name="Arigoni F."/>
        </authorList>
    </citation>
    <scope>NUCLEOTIDE SEQUENCE [LARGE SCALE GENOMIC DNA]</scope>
    <source>
        <strain>NCC 2705</strain>
    </source>
</reference>
<protein>
    <recommendedName>
        <fullName evidence="1">Endonuclease NucS</fullName>
        <ecNumber evidence="1">3.1.-.-</ecNumber>
    </recommendedName>
</protein>
<keyword id="KW-0963">Cytoplasm</keyword>
<keyword id="KW-0238">DNA-binding</keyword>
<keyword id="KW-0255">Endonuclease</keyword>
<keyword id="KW-0378">Hydrolase</keyword>
<keyword id="KW-0540">Nuclease</keyword>
<keyword id="KW-1185">Reference proteome</keyword>
<proteinExistence type="inferred from homology"/>
<evidence type="ECO:0000255" key="1">
    <source>
        <dbReference type="HAMAP-Rule" id="MF_00722"/>
    </source>
</evidence>
<evidence type="ECO:0000256" key="2">
    <source>
        <dbReference type="SAM" id="MobiDB-lite"/>
    </source>
</evidence>
<evidence type="ECO:0000305" key="3"/>
<gene>
    <name evidence="1" type="primary">nucS</name>
    <name type="ordered locus">BL0355</name>
</gene>
<name>NUCS_BIFLO</name>
<accession>Q8G7B5</accession>
<organism>
    <name type="scientific">Bifidobacterium longum (strain NCC 2705)</name>
    <dbReference type="NCBI Taxonomy" id="206672"/>
    <lineage>
        <taxon>Bacteria</taxon>
        <taxon>Bacillati</taxon>
        <taxon>Actinomycetota</taxon>
        <taxon>Actinomycetes</taxon>
        <taxon>Bifidobacteriales</taxon>
        <taxon>Bifidobacteriaceae</taxon>
        <taxon>Bifidobacterium</taxon>
    </lineage>
</organism>
<sequence>MRVIVADCSAEYSGRLNASLPLAKRVLLIKADSSLLIFSELGSYKPLNWMTAPCTIREIDPAAKSAQHSRESVAGGAVDGDSATHSPESVAAGEPEKVLRVSADKGSDILEVTLQHIYSDQTYDLGEDPGLIKDGVEDHLQRYLAEQIERIGKGAKLVRREYPTAIGPVDIMAVNAEGEHVAVEIKRHGGIDGVEQLTRYCELLNRDPLLAPVHGIFAAQTITPQAQVLAKDRGFTCLILDYDDMKGTEDDSLRLF</sequence>
<comment type="function">
    <text evidence="1">Cleaves both 3' and 5' ssDNA extremities of branched DNA structures.</text>
</comment>
<comment type="subcellular location">
    <subcellularLocation>
        <location evidence="1">Cytoplasm</location>
    </subcellularLocation>
</comment>
<comment type="similarity">
    <text evidence="1">Belongs to the NucS endonuclease family.</text>
</comment>
<comment type="sequence caution" evidence="3">
    <conflict type="erroneous initiation">
        <sequence resource="EMBL-CDS" id="AAN24193"/>
    </conflict>
</comment>
<feature type="chain" id="PRO_0000155680" description="Endonuclease NucS">
    <location>
        <begin position="1"/>
        <end position="256"/>
    </location>
</feature>
<feature type="region of interest" description="Disordered" evidence="2">
    <location>
        <begin position="62"/>
        <end position="97"/>
    </location>
</feature>